<accession>Q6PBK1</accession>
<sequence length="144" mass="16370">MAAPGGVLNCEDFSLFQEVLKVMRTIDDRIVHSLNTTVPTASFSGKVDATQTCKELYESLMEAHLSRDKAIKSCIKETSAVVSQLREERAKDSDNLSVIKQLRKEQTKLKLMQSELNVEEVVNDRSLKVFNERCRIHYTPPKIK</sequence>
<keyword id="KW-0175">Coiled coil</keyword>
<keyword id="KW-1185">Reference proteome</keyword>
<feature type="chain" id="PRO_0000360036" description="Protein MIX23">
    <location>
        <begin position="1"/>
        <end position="144"/>
    </location>
</feature>
<feature type="coiled-coil region" evidence="1">
    <location>
        <begin position="82"/>
        <end position="120"/>
    </location>
</feature>
<comment type="similarity">
    <text evidence="2">Belongs to the MIX23 family.</text>
</comment>
<comment type="sequence caution" evidence="2">
    <conflict type="erroneous initiation">
        <sequence resource="EMBL-CDS" id="AAH59679"/>
    </conflict>
</comment>
<protein>
    <recommendedName>
        <fullName evidence="2">Protein MIX23</fullName>
    </recommendedName>
    <alternativeName>
        <fullName>Coiled-coil domain-containing protein 58</fullName>
    </alternativeName>
</protein>
<organism>
    <name type="scientific">Danio rerio</name>
    <name type="common">Zebrafish</name>
    <name type="synonym">Brachydanio rerio</name>
    <dbReference type="NCBI Taxonomy" id="7955"/>
    <lineage>
        <taxon>Eukaryota</taxon>
        <taxon>Metazoa</taxon>
        <taxon>Chordata</taxon>
        <taxon>Craniata</taxon>
        <taxon>Vertebrata</taxon>
        <taxon>Euteleostomi</taxon>
        <taxon>Actinopterygii</taxon>
        <taxon>Neopterygii</taxon>
        <taxon>Teleostei</taxon>
        <taxon>Ostariophysi</taxon>
        <taxon>Cypriniformes</taxon>
        <taxon>Danionidae</taxon>
        <taxon>Danioninae</taxon>
        <taxon>Danio</taxon>
    </lineage>
</organism>
<evidence type="ECO:0000255" key="1"/>
<evidence type="ECO:0000305" key="2"/>
<proteinExistence type="evidence at transcript level"/>
<reference key="1">
    <citation type="submission" date="2003-10" db="EMBL/GenBank/DDBJ databases">
        <authorList>
            <consortium name="NIH - Zebrafish Gene Collection (ZGC) project"/>
        </authorList>
    </citation>
    <scope>NUCLEOTIDE SEQUENCE [LARGE SCALE MRNA] OF 2-144</scope>
    <source>
        <tissue>Eye</tissue>
    </source>
</reference>
<name>MIX23_DANRE</name>
<gene>
    <name type="primary">mix23</name>
    <name type="synonym">ccdc58</name>
    <name type="ORF">zgc:73369</name>
</gene>
<dbReference type="EMBL" id="BC059679">
    <property type="protein sequence ID" value="AAH59679.1"/>
    <property type="status" value="ALT_INIT"/>
    <property type="molecule type" value="mRNA"/>
</dbReference>
<dbReference type="RefSeq" id="NP_957101.1">
    <property type="nucleotide sequence ID" value="NM_200807.1"/>
</dbReference>
<dbReference type="RefSeq" id="XP_005162736.1">
    <property type="nucleotide sequence ID" value="XM_005162679.3"/>
</dbReference>
<dbReference type="SMR" id="Q6PBK1"/>
<dbReference type="FunCoup" id="Q6PBK1">
    <property type="interactions" value="1597"/>
</dbReference>
<dbReference type="STRING" id="7955.ENSDARP00000106348"/>
<dbReference type="PaxDb" id="7955-ENSDARP00000106348"/>
<dbReference type="Ensembl" id="ENSDART00000130958">
    <property type="protein sequence ID" value="ENSDARP00000106348"/>
    <property type="gene ID" value="ENSDARG00000045351"/>
</dbReference>
<dbReference type="GeneID" id="393780"/>
<dbReference type="KEGG" id="dre:393780"/>
<dbReference type="AGR" id="ZFIN:ZDB-GENE-040426-1780"/>
<dbReference type="CTD" id="131076"/>
<dbReference type="ZFIN" id="ZDB-GENE-040426-1780">
    <property type="gene designation" value="mix23"/>
</dbReference>
<dbReference type="eggNOG" id="KOG4613">
    <property type="taxonomic scope" value="Eukaryota"/>
</dbReference>
<dbReference type="HOGENOM" id="CLU_123941_0_0_1"/>
<dbReference type="InParanoid" id="Q6PBK1"/>
<dbReference type="OMA" id="CRYFEPP"/>
<dbReference type="OrthoDB" id="5593818at2759"/>
<dbReference type="PhylomeDB" id="Q6PBK1"/>
<dbReference type="TreeFam" id="TF324875"/>
<dbReference type="PRO" id="PR:Q6PBK1"/>
<dbReference type="Proteomes" id="UP000000437">
    <property type="component" value="Chromosome 24"/>
</dbReference>
<dbReference type="Bgee" id="ENSDARG00000045351">
    <property type="expression patterns" value="Expressed in bone element and 33 other cell types or tissues"/>
</dbReference>
<dbReference type="GO" id="GO:0005758">
    <property type="term" value="C:mitochondrial intermembrane space"/>
    <property type="evidence" value="ECO:0007669"/>
    <property type="project" value="InterPro"/>
</dbReference>
<dbReference type="GO" id="GO:0005739">
    <property type="term" value="C:mitochondrion"/>
    <property type="evidence" value="ECO:0000318"/>
    <property type="project" value="GO_Central"/>
</dbReference>
<dbReference type="InterPro" id="IPR019171">
    <property type="entry name" value="MIX23"/>
</dbReference>
<dbReference type="PANTHER" id="PTHR31905">
    <property type="entry name" value="COILED-COIL DOMAIN-CONTAINING PROTEIN 58"/>
    <property type="match status" value="1"/>
</dbReference>
<dbReference type="PANTHER" id="PTHR31905:SF2">
    <property type="entry name" value="PROTEIN MIX23"/>
    <property type="match status" value="1"/>
</dbReference>
<dbReference type="Pfam" id="PF09774">
    <property type="entry name" value="MIX23"/>
    <property type="match status" value="1"/>
</dbReference>